<name>GLMM_SALPA</name>
<gene>
    <name evidence="1" type="primary">glmM</name>
    <name type="ordered locus">SPA3161</name>
</gene>
<feature type="chain" id="PRO_0000147951" description="Phosphoglucosamine mutase">
    <location>
        <begin position="1"/>
        <end position="445"/>
    </location>
</feature>
<feature type="active site" description="Phosphoserine intermediate" evidence="1">
    <location>
        <position position="102"/>
    </location>
</feature>
<feature type="binding site" description="via phosphate group" evidence="1">
    <location>
        <position position="102"/>
    </location>
    <ligand>
        <name>Mg(2+)</name>
        <dbReference type="ChEBI" id="CHEBI:18420"/>
    </ligand>
</feature>
<feature type="binding site" evidence="1">
    <location>
        <position position="241"/>
    </location>
    <ligand>
        <name>Mg(2+)</name>
        <dbReference type="ChEBI" id="CHEBI:18420"/>
    </ligand>
</feature>
<feature type="binding site" evidence="1">
    <location>
        <position position="243"/>
    </location>
    <ligand>
        <name>Mg(2+)</name>
        <dbReference type="ChEBI" id="CHEBI:18420"/>
    </ligand>
</feature>
<feature type="binding site" evidence="1">
    <location>
        <position position="245"/>
    </location>
    <ligand>
        <name>Mg(2+)</name>
        <dbReference type="ChEBI" id="CHEBI:18420"/>
    </ligand>
</feature>
<feature type="modified residue" description="Phosphoserine" evidence="1">
    <location>
        <position position="102"/>
    </location>
</feature>
<protein>
    <recommendedName>
        <fullName evidence="1">Phosphoglucosamine mutase</fullName>
        <ecNumber evidence="1">5.4.2.10</ecNumber>
    </recommendedName>
</protein>
<sequence length="445" mass="47455">MSNRKYFGTDGIRGRVGNAPITPDFVLKLGWAAGKVLARHGSRKIIIGKDTRISGYMLESALEAGLAAAGLSASFTGPMPTPAVAYLTRTFRAEAGIVISASHNPFYDNGIKFFSIDGTKLPDDVEEAIEAEMEKEITCVDSAELGKASRIVDAAGRYIEFCKGTFPNELSLNGLKVVVDCANGATYHIAPNVLRELGATVIAIGCEPNGVNINEEVGATDVRALQARVLVEKADLGIALDGDGDRVIMVDHEGNKVDGDQIMYIIAREGLRQGQLRGGAVGTLMSNMGLELALKQLGIPFARAKVGDRYVLEKLQEKGWRIGAENSGHVILLDKTTTGDGIVAGLQVLAAMVRNHMSLHDLCSGMKMFPQILVNVRYTAGSGDPLENDAVKAVTADVEATLGNRGRVLLRKSGTEPLIRVMVEGEDEAQVTAFAHRIADAVKAV</sequence>
<organism>
    <name type="scientific">Salmonella paratyphi A (strain ATCC 9150 / SARB42)</name>
    <dbReference type="NCBI Taxonomy" id="295319"/>
    <lineage>
        <taxon>Bacteria</taxon>
        <taxon>Pseudomonadati</taxon>
        <taxon>Pseudomonadota</taxon>
        <taxon>Gammaproteobacteria</taxon>
        <taxon>Enterobacterales</taxon>
        <taxon>Enterobacteriaceae</taxon>
        <taxon>Salmonella</taxon>
    </lineage>
</organism>
<dbReference type="EC" id="5.4.2.10" evidence="1"/>
<dbReference type="EMBL" id="CP000026">
    <property type="protein sequence ID" value="AAV78986.1"/>
    <property type="molecule type" value="Genomic_DNA"/>
</dbReference>
<dbReference type="RefSeq" id="WP_000071174.1">
    <property type="nucleotide sequence ID" value="NC_006511.1"/>
</dbReference>
<dbReference type="SMR" id="Q5PLC4"/>
<dbReference type="KEGG" id="spt:SPA3161"/>
<dbReference type="HOGENOM" id="CLU_016950_7_0_6"/>
<dbReference type="Proteomes" id="UP000008185">
    <property type="component" value="Chromosome"/>
</dbReference>
<dbReference type="GO" id="GO:0005829">
    <property type="term" value="C:cytosol"/>
    <property type="evidence" value="ECO:0007669"/>
    <property type="project" value="TreeGrafter"/>
</dbReference>
<dbReference type="GO" id="GO:0000287">
    <property type="term" value="F:magnesium ion binding"/>
    <property type="evidence" value="ECO:0007669"/>
    <property type="project" value="UniProtKB-UniRule"/>
</dbReference>
<dbReference type="GO" id="GO:0008966">
    <property type="term" value="F:phosphoglucosamine mutase activity"/>
    <property type="evidence" value="ECO:0007669"/>
    <property type="project" value="UniProtKB-UniRule"/>
</dbReference>
<dbReference type="GO" id="GO:0004615">
    <property type="term" value="F:phosphomannomutase activity"/>
    <property type="evidence" value="ECO:0007669"/>
    <property type="project" value="TreeGrafter"/>
</dbReference>
<dbReference type="GO" id="GO:0005975">
    <property type="term" value="P:carbohydrate metabolic process"/>
    <property type="evidence" value="ECO:0007669"/>
    <property type="project" value="InterPro"/>
</dbReference>
<dbReference type="GO" id="GO:0009252">
    <property type="term" value="P:peptidoglycan biosynthetic process"/>
    <property type="evidence" value="ECO:0007669"/>
    <property type="project" value="TreeGrafter"/>
</dbReference>
<dbReference type="GO" id="GO:0006048">
    <property type="term" value="P:UDP-N-acetylglucosamine biosynthetic process"/>
    <property type="evidence" value="ECO:0007669"/>
    <property type="project" value="TreeGrafter"/>
</dbReference>
<dbReference type="CDD" id="cd05802">
    <property type="entry name" value="GlmM"/>
    <property type="match status" value="1"/>
</dbReference>
<dbReference type="FunFam" id="3.30.310.50:FF:000001">
    <property type="entry name" value="Phosphoglucosamine mutase"/>
    <property type="match status" value="1"/>
</dbReference>
<dbReference type="FunFam" id="3.40.120.10:FF:000001">
    <property type="entry name" value="Phosphoglucosamine mutase"/>
    <property type="match status" value="1"/>
</dbReference>
<dbReference type="FunFam" id="3.40.120.10:FF:000002">
    <property type="entry name" value="Phosphoglucosamine mutase"/>
    <property type="match status" value="1"/>
</dbReference>
<dbReference type="Gene3D" id="3.40.120.10">
    <property type="entry name" value="Alpha-D-Glucose-1,6-Bisphosphate, subunit A, domain 3"/>
    <property type="match status" value="3"/>
</dbReference>
<dbReference type="Gene3D" id="3.30.310.50">
    <property type="entry name" value="Alpha-D-phosphohexomutase, C-terminal domain"/>
    <property type="match status" value="1"/>
</dbReference>
<dbReference type="HAMAP" id="MF_01554_B">
    <property type="entry name" value="GlmM_B"/>
    <property type="match status" value="1"/>
</dbReference>
<dbReference type="InterPro" id="IPR005844">
    <property type="entry name" value="A-D-PHexomutase_a/b/a-I"/>
</dbReference>
<dbReference type="InterPro" id="IPR016055">
    <property type="entry name" value="A-D-PHexomutase_a/b/a-I/II/III"/>
</dbReference>
<dbReference type="InterPro" id="IPR005845">
    <property type="entry name" value="A-D-PHexomutase_a/b/a-II"/>
</dbReference>
<dbReference type="InterPro" id="IPR005846">
    <property type="entry name" value="A-D-PHexomutase_a/b/a-III"/>
</dbReference>
<dbReference type="InterPro" id="IPR005843">
    <property type="entry name" value="A-D-PHexomutase_C"/>
</dbReference>
<dbReference type="InterPro" id="IPR036900">
    <property type="entry name" value="A-D-PHexomutase_C_sf"/>
</dbReference>
<dbReference type="InterPro" id="IPR016066">
    <property type="entry name" value="A-D-PHexomutase_CS"/>
</dbReference>
<dbReference type="InterPro" id="IPR005841">
    <property type="entry name" value="Alpha-D-phosphohexomutase_SF"/>
</dbReference>
<dbReference type="InterPro" id="IPR006352">
    <property type="entry name" value="GlmM_bact"/>
</dbReference>
<dbReference type="InterPro" id="IPR050060">
    <property type="entry name" value="Phosphoglucosamine_mutase"/>
</dbReference>
<dbReference type="NCBIfam" id="TIGR01455">
    <property type="entry name" value="glmM"/>
    <property type="match status" value="1"/>
</dbReference>
<dbReference type="NCBIfam" id="NF008139">
    <property type="entry name" value="PRK10887.1"/>
    <property type="match status" value="1"/>
</dbReference>
<dbReference type="PANTHER" id="PTHR42946:SF1">
    <property type="entry name" value="PHOSPHOGLUCOMUTASE (ALPHA-D-GLUCOSE-1,6-BISPHOSPHATE-DEPENDENT)"/>
    <property type="match status" value="1"/>
</dbReference>
<dbReference type="PANTHER" id="PTHR42946">
    <property type="entry name" value="PHOSPHOHEXOSE MUTASE"/>
    <property type="match status" value="1"/>
</dbReference>
<dbReference type="Pfam" id="PF02878">
    <property type="entry name" value="PGM_PMM_I"/>
    <property type="match status" value="1"/>
</dbReference>
<dbReference type="Pfam" id="PF02879">
    <property type="entry name" value="PGM_PMM_II"/>
    <property type="match status" value="1"/>
</dbReference>
<dbReference type="Pfam" id="PF02880">
    <property type="entry name" value="PGM_PMM_III"/>
    <property type="match status" value="1"/>
</dbReference>
<dbReference type="Pfam" id="PF00408">
    <property type="entry name" value="PGM_PMM_IV"/>
    <property type="match status" value="1"/>
</dbReference>
<dbReference type="PRINTS" id="PR00509">
    <property type="entry name" value="PGMPMM"/>
</dbReference>
<dbReference type="SUPFAM" id="SSF55957">
    <property type="entry name" value="Phosphoglucomutase, C-terminal domain"/>
    <property type="match status" value="1"/>
</dbReference>
<dbReference type="SUPFAM" id="SSF53738">
    <property type="entry name" value="Phosphoglucomutase, first 3 domains"/>
    <property type="match status" value="3"/>
</dbReference>
<dbReference type="PROSITE" id="PS00710">
    <property type="entry name" value="PGM_PMM"/>
    <property type="match status" value="1"/>
</dbReference>
<reference key="1">
    <citation type="journal article" date="2004" name="Nat. Genet.">
        <title>Comparison of genome degradation in Paratyphi A and Typhi, human-restricted serovars of Salmonella enterica that cause typhoid.</title>
        <authorList>
            <person name="McClelland M."/>
            <person name="Sanderson K.E."/>
            <person name="Clifton S.W."/>
            <person name="Latreille P."/>
            <person name="Porwollik S."/>
            <person name="Sabo A."/>
            <person name="Meyer R."/>
            <person name="Bieri T."/>
            <person name="Ozersky P."/>
            <person name="McLellan M."/>
            <person name="Harkins C.R."/>
            <person name="Wang C."/>
            <person name="Nguyen C."/>
            <person name="Berghoff A."/>
            <person name="Elliott G."/>
            <person name="Kohlberg S."/>
            <person name="Strong C."/>
            <person name="Du F."/>
            <person name="Carter J."/>
            <person name="Kremizki C."/>
            <person name="Layman D."/>
            <person name="Leonard S."/>
            <person name="Sun H."/>
            <person name="Fulton L."/>
            <person name="Nash W."/>
            <person name="Miner T."/>
            <person name="Minx P."/>
            <person name="Delehaunty K."/>
            <person name="Fronick C."/>
            <person name="Magrini V."/>
            <person name="Nhan M."/>
            <person name="Warren W."/>
            <person name="Florea L."/>
            <person name="Spieth J."/>
            <person name="Wilson R.K."/>
        </authorList>
    </citation>
    <scope>NUCLEOTIDE SEQUENCE [LARGE SCALE GENOMIC DNA]</scope>
    <source>
        <strain>ATCC 9150 / SARB42</strain>
    </source>
</reference>
<evidence type="ECO:0000255" key="1">
    <source>
        <dbReference type="HAMAP-Rule" id="MF_01554"/>
    </source>
</evidence>
<proteinExistence type="inferred from homology"/>
<keyword id="KW-0413">Isomerase</keyword>
<keyword id="KW-0460">Magnesium</keyword>
<keyword id="KW-0479">Metal-binding</keyword>
<keyword id="KW-0597">Phosphoprotein</keyword>
<comment type="function">
    <text evidence="1">Catalyzes the conversion of glucosamine-6-phosphate to glucosamine-1-phosphate.</text>
</comment>
<comment type="catalytic activity">
    <reaction evidence="1">
        <text>alpha-D-glucosamine 1-phosphate = D-glucosamine 6-phosphate</text>
        <dbReference type="Rhea" id="RHEA:23424"/>
        <dbReference type="ChEBI" id="CHEBI:58516"/>
        <dbReference type="ChEBI" id="CHEBI:58725"/>
        <dbReference type="EC" id="5.4.2.10"/>
    </reaction>
</comment>
<comment type="cofactor">
    <cofactor evidence="1">
        <name>Mg(2+)</name>
        <dbReference type="ChEBI" id="CHEBI:18420"/>
    </cofactor>
    <text evidence="1">Binds 1 Mg(2+) ion per subunit.</text>
</comment>
<comment type="PTM">
    <text evidence="1">Activated by phosphorylation.</text>
</comment>
<comment type="similarity">
    <text evidence="1">Belongs to the phosphohexose mutase family.</text>
</comment>
<accession>Q5PLC4</accession>